<accession>Q8N782</accession>
<accession>J3KR51</accession>
<accession>Q8TF23</accession>
<feature type="chain" id="PRO_0000047638" description="Zinc finger protein 525">
    <location>
        <begin position="1"/>
        <end position="479"/>
    </location>
</feature>
<feature type="domain" description="KRAB" evidence="2">
    <location>
        <begin position="8"/>
        <end position="81"/>
    </location>
</feature>
<feature type="zinc finger region" description="C2H2-type 1; degenerate" evidence="1">
    <location>
        <begin position="215"/>
        <end position="237"/>
    </location>
</feature>
<feature type="zinc finger region" description="C2H2-type 2" evidence="1">
    <location>
        <begin position="243"/>
        <end position="265"/>
    </location>
</feature>
<feature type="zinc finger region" description="C2H2-type 3" evidence="1">
    <location>
        <begin position="271"/>
        <end position="293"/>
    </location>
</feature>
<feature type="zinc finger region" description="C2H2-type 4" evidence="1">
    <location>
        <begin position="299"/>
        <end position="321"/>
    </location>
</feature>
<feature type="zinc finger region" description="C2H2-type 5" evidence="1">
    <location>
        <begin position="327"/>
        <end position="349"/>
    </location>
</feature>
<feature type="zinc finger region" description="C2H2-type 6" evidence="1">
    <location>
        <begin position="355"/>
        <end position="377"/>
    </location>
</feature>
<feature type="zinc finger region" description="C2H2-type 7" evidence="1">
    <location>
        <begin position="383"/>
        <end position="405"/>
    </location>
</feature>
<feature type="zinc finger region" description="C2H2-type 8" evidence="1">
    <location>
        <begin position="411"/>
        <end position="433"/>
    </location>
</feature>
<feature type="zinc finger region" description="C2H2-type 9" evidence="1">
    <location>
        <begin position="439"/>
        <end position="461"/>
    </location>
</feature>
<reference key="1">
    <citation type="journal article" date="2004" name="Nature">
        <title>The DNA sequence and biology of human chromosome 19.</title>
        <authorList>
            <person name="Grimwood J."/>
            <person name="Gordon L.A."/>
            <person name="Olsen A.S."/>
            <person name="Terry A."/>
            <person name="Schmutz J."/>
            <person name="Lamerdin J.E."/>
            <person name="Hellsten U."/>
            <person name="Goodstein D."/>
            <person name="Couronne O."/>
            <person name="Tran-Gyamfi M."/>
            <person name="Aerts A."/>
            <person name="Altherr M."/>
            <person name="Ashworth L."/>
            <person name="Bajorek E."/>
            <person name="Black S."/>
            <person name="Branscomb E."/>
            <person name="Caenepeel S."/>
            <person name="Carrano A.V."/>
            <person name="Caoile C."/>
            <person name="Chan Y.M."/>
            <person name="Christensen M."/>
            <person name="Cleland C.A."/>
            <person name="Copeland A."/>
            <person name="Dalin E."/>
            <person name="Dehal P."/>
            <person name="Denys M."/>
            <person name="Detter J.C."/>
            <person name="Escobar J."/>
            <person name="Flowers D."/>
            <person name="Fotopulos D."/>
            <person name="Garcia C."/>
            <person name="Georgescu A.M."/>
            <person name="Glavina T."/>
            <person name="Gomez M."/>
            <person name="Gonzales E."/>
            <person name="Groza M."/>
            <person name="Hammon N."/>
            <person name="Hawkins T."/>
            <person name="Haydu L."/>
            <person name="Ho I."/>
            <person name="Huang W."/>
            <person name="Israni S."/>
            <person name="Jett J."/>
            <person name="Kadner K."/>
            <person name="Kimball H."/>
            <person name="Kobayashi A."/>
            <person name="Larionov V."/>
            <person name="Leem S.-H."/>
            <person name="Lopez F."/>
            <person name="Lou Y."/>
            <person name="Lowry S."/>
            <person name="Malfatti S."/>
            <person name="Martinez D."/>
            <person name="McCready P.M."/>
            <person name="Medina C."/>
            <person name="Morgan J."/>
            <person name="Nelson K."/>
            <person name="Nolan M."/>
            <person name="Ovcharenko I."/>
            <person name="Pitluck S."/>
            <person name="Pollard M."/>
            <person name="Popkie A.P."/>
            <person name="Predki P."/>
            <person name="Quan G."/>
            <person name="Ramirez L."/>
            <person name="Rash S."/>
            <person name="Retterer J."/>
            <person name="Rodriguez A."/>
            <person name="Rogers S."/>
            <person name="Salamov A."/>
            <person name="Salazar A."/>
            <person name="She X."/>
            <person name="Smith D."/>
            <person name="Slezak T."/>
            <person name="Solovyev V."/>
            <person name="Thayer N."/>
            <person name="Tice H."/>
            <person name="Tsai M."/>
            <person name="Ustaszewska A."/>
            <person name="Vo N."/>
            <person name="Wagner M."/>
            <person name="Wheeler J."/>
            <person name="Wu K."/>
            <person name="Xie G."/>
            <person name="Yang J."/>
            <person name="Dubchak I."/>
            <person name="Furey T.S."/>
            <person name="DeJong P."/>
            <person name="Dickson M."/>
            <person name="Gordon D."/>
            <person name="Eichler E.E."/>
            <person name="Pennacchio L.A."/>
            <person name="Richardson P."/>
            <person name="Stubbs L."/>
            <person name="Rokhsar D.S."/>
            <person name="Myers R.M."/>
            <person name="Rubin E.M."/>
            <person name="Lucas S.M."/>
        </authorList>
    </citation>
    <scope>NUCLEOTIDE SEQUENCE [LARGE SCALE GENOMIC DNA]</scope>
</reference>
<reference key="2">
    <citation type="submission" date="2005-07" db="EMBL/GenBank/DDBJ databases">
        <authorList>
            <person name="Mural R.J."/>
            <person name="Istrail S."/>
            <person name="Sutton G.G."/>
            <person name="Florea L."/>
            <person name="Halpern A.L."/>
            <person name="Mobarry C.M."/>
            <person name="Lippert R."/>
            <person name="Walenz B."/>
            <person name="Shatkay H."/>
            <person name="Dew I."/>
            <person name="Miller J.R."/>
            <person name="Flanigan M.J."/>
            <person name="Edwards N.J."/>
            <person name="Bolanos R."/>
            <person name="Fasulo D."/>
            <person name="Halldorsson B.V."/>
            <person name="Hannenhalli S."/>
            <person name="Turner R."/>
            <person name="Yooseph S."/>
            <person name="Lu F."/>
            <person name="Nusskern D.R."/>
            <person name="Shue B.C."/>
            <person name="Zheng X.H."/>
            <person name="Zhong F."/>
            <person name="Delcher A.L."/>
            <person name="Huson D.H."/>
            <person name="Kravitz S.A."/>
            <person name="Mouchard L."/>
            <person name="Reinert K."/>
            <person name="Remington K.A."/>
            <person name="Clark A.G."/>
            <person name="Waterman M.S."/>
            <person name="Eichler E.E."/>
            <person name="Adams M.D."/>
            <person name="Hunkapiller M.W."/>
            <person name="Myers E.W."/>
            <person name="Venter J.C."/>
        </authorList>
    </citation>
    <scope>NUCLEOTIDE SEQUENCE [LARGE SCALE GENOMIC DNA]</scope>
</reference>
<reference key="3">
    <citation type="journal article" date="2004" name="Nat. Genet.">
        <title>Complete sequencing and characterization of 21,243 full-length human cDNAs.</title>
        <authorList>
            <person name="Ota T."/>
            <person name="Suzuki Y."/>
            <person name="Nishikawa T."/>
            <person name="Otsuki T."/>
            <person name="Sugiyama T."/>
            <person name="Irie R."/>
            <person name="Wakamatsu A."/>
            <person name="Hayashi K."/>
            <person name="Sato H."/>
            <person name="Nagai K."/>
            <person name="Kimura K."/>
            <person name="Makita H."/>
            <person name="Sekine M."/>
            <person name="Obayashi M."/>
            <person name="Nishi T."/>
            <person name="Shibahara T."/>
            <person name="Tanaka T."/>
            <person name="Ishii S."/>
            <person name="Yamamoto J."/>
            <person name="Saito K."/>
            <person name="Kawai Y."/>
            <person name="Isono Y."/>
            <person name="Nakamura Y."/>
            <person name="Nagahari K."/>
            <person name="Murakami K."/>
            <person name="Yasuda T."/>
            <person name="Iwayanagi T."/>
            <person name="Wagatsuma M."/>
            <person name="Shiratori A."/>
            <person name="Sudo H."/>
            <person name="Hosoiri T."/>
            <person name="Kaku Y."/>
            <person name="Kodaira H."/>
            <person name="Kondo H."/>
            <person name="Sugawara M."/>
            <person name="Takahashi M."/>
            <person name="Kanda K."/>
            <person name="Yokoi T."/>
            <person name="Furuya T."/>
            <person name="Kikkawa E."/>
            <person name="Omura Y."/>
            <person name="Abe K."/>
            <person name="Kamihara K."/>
            <person name="Katsuta N."/>
            <person name="Sato K."/>
            <person name="Tanikawa M."/>
            <person name="Yamazaki M."/>
            <person name="Ninomiya K."/>
            <person name="Ishibashi T."/>
            <person name="Yamashita H."/>
            <person name="Murakawa K."/>
            <person name="Fujimori K."/>
            <person name="Tanai H."/>
            <person name="Kimata M."/>
            <person name="Watanabe M."/>
            <person name="Hiraoka S."/>
            <person name="Chiba Y."/>
            <person name="Ishida S."/>
            <person name="Ono Y."/>
            <person name="Takiguchi S."/>
            <person name="Watanabe S."/>
            <person name="Yosida M."/>
            <person name="Hotuta T."/>
            <person name="Kusano J."/>
            <person name="Kanehori K."/>
            <person name="Takahashi-Fujii A."/>
            <person name="Hara H."/>
            <person name="Tanase T.-O."/>
            <person name="Nomura Y."/>
            <person name="Togiya S."/>
            <person name="Komai F."/>
            <person name="Hara R."/>
            <person name="Takeuchi K."/>
            <person name="Arita M."/>
            <person name="Imose N."/>
            <person name="Musashino K."/>
            <person name="Yuuki H."/>
            <person name="Oshima A."/>
            <person name="Sasaki N."/>
            <person name="Aotsuka S."/>
            <person name="Yoshikawa Y."/>
            <person name="Matsunawa H."/>
            <person name="Ichihara T."/>
            <person name="Shiohata N."/>
            <person name="Sano S."/>
            <person name="Moriya S."/>
            <person name="Momiyama H."/>
            <person name="Satoh N."/>
            <person name="Takami S."/>
            <person name="Terashima Y."/>
            <person name="Suzuki O."/>
            <person name="Nakagawa S."/>
            <person name="Senoh A."/>
            <person name="Mizoguchi H."/>
            <person name="Goto Y."/>
            <person name="Shimizu F."/>
            <person name="Wakebe H."/>
            <person name="Hishigaki H."/>
            <person name="Watanabe T."/>
            <person name="Sugiyama A."/>
            <person name="Takemoto M."/>
            <person name="Kawakami B."/>
            <person name="Yamazaki M."/>
            <person name="Watanabe K."/>
            <person name="Kumagai A."/>
            <person name="Itakura S."/>
            <person name="Fukuzumi Y."/>
            <person name="Fujimori Y."/>
            <person name="Komiyama M."/>
            <person name="Tashiro H."/>
            <person name="Tanigami A."/>
            <person name="Fujiwara T."/>
            <person name="Ono T."/>
            <person name="Yamada K."/>
            <person name="Fujii Y."/>
            <person name="Ozaki K."/>
            <person name="Hirao M."/>
            <person name="Ohmori Y."/>
            <person name="Kawabata A."/>
            <person name="Hikiji T."/>
            <person name="Kobatake N."/>
            <person name="Inagaki H."/>
            <person name="Ikema Y."/>
            <person name="Okamoto S."/>
            <person name="Okitani R."/>
            <person name="Kawakami T."/>
            <person name="Noguchi S."/>
            <person name="Itoh T."/>
            <person name="Shigeta K."/>
            <person name="Senba T."/>
            <person name="Matsumura K."/>
            <person name="Nakajima Y."/>
            <person name="Mizuno T."/>
            <person name="Morinaga M."/>
            <person name="Sasaki M."/>
            <person name="Togashi T."/>
            <person name="Oyama M."/>
            <person name="Hata H."/>
            <person name="Watanabe M."/>
            <person name="Komatsu T."/>
            <person name="Mizushima-Sugano J."/>
            <person name="Satoh T."/>
            <person name="Shirai Y."/>
            <person name="Takahashi Y."/>
            <person name="Nakagawa K."/>
            <person name="Okumura K."/>
            <person name="Nagase T."/>
            <person name="Nomura N."/>
            <person name="Kikuchi H."/>
            <person name="Masuho Y."/>
            <person name="Yamashita R."/>
            <person name="Nakai K."/>
            <person name="Yada T."/>
            <person name="Nakamura Y."/>
            <person name="Ohara O."/>
            <person name="Isogai T."/>
            <person name="Sugano S."/>
        </authorList>
    </citation>
    <scope>NUCLEOTIDE SEQUENCE [LARGE SCALE MRNA] OF 282-479</scope>
    <source>
        <tissue>Thyroid</tissue>
    </source>
</reference>
<reference key="4">
    <citation type="journal article" date="2001" name="DNA Res.">
        <title>Prediction of the coding sequences of unidentified human genes. XXII. The complete sequences of 50 new cDNA clones which code for large proteins.</title>
        <authorList>
            <person name="Nagase T."/>
            <person name="Kikuno R."/>
            <person name="Ohara O."/>
        </authorList>
    </citation>
    <scope>NUCLEOTIDE SEQUENCE [LARGE SCALE MRNA] OF 324-479</scope>
    <source>
        <tissue>Brain</tissue>
    </source>
</reference>
<keyword id="KW-0238">DNA-binding</keyword>
<keyword id="KW-0479">Metal-binding</keyword>
<keyword id="KW-0539">Nucleus</keyword>
<keyword id="KW-1267">Proteomics identification</keyword>
<keyword id="KW-1185">Reference proteome</keyword>
<keyword id="KW-0677">Repeat</keyword>
<keyword id="KW-0804">Transcription</keyword>
<keyword id="KW-0805">Transcription regulation</keyword>
<keyword id="KW-0862">Zinc</keyword>
<keyword id="KW-0863">Zinc-finger</keyword>
<protein>
    <recommendedName>
        <fullName>Zinc finger protein 525</fullName>
    </recommendedName>
</protein>
<gene>
    <name type="primary">ZNF525</name>
    <name type="synonym">KIAA1979</name>
</gene>
<comment type="function">
    <text>May be involved in transcriptional regulation.</text>
</comment>
<comment type="subcellular location">
    <subcellularLocation>
        <location evidence="3">Nucleus</location>
    </subcellularLocation>
</comment>
<comment type="similarity">
    <text evidence="3">Belongs to the krueppel C2H2-type zinc-finger protein family.</text>
</comment>
<comment type="sequence caution" evidence="3">
    <conflict type="erroneous translation">
        <sequence resource="EMBL-CDS" id="BAB85565"/>
    </conflict>
    <text>Wrong choice of CDS.</text>
</comment>
<comment type="sequence caution" evidence="3">
    <conflict type="erroneous translation">
        <sequence resource="EMBL-CDS" id="BAC05417"/>
    </conflict>
    <text>Wrong choice of CDS.</text>
</comment>
<comment type="sequence caution" evidence="3">
    <conflict type="frameshift">
        <sequence resource="EMBL-CDS" id="BAC05417"/>
    </conflict>
</comment>
<dbReference type="EMBL" id="AC010467">
    <property type="status" value="NOT_ANNOTATED_CDS"/>
    <property type="molecule type" value="Genomic_DNA"/>
</dbReference>
<dbReference type="EMBL" id="AC022137">
    <property type="status" value="NOT_ANNOTATED_CDS"/>
    <property type="molecule type" value="Genomic_DNA"/>
</dbReference>
<dbReference type="EMBL" id="AC125388">
    <property type="status" value="NOT_ANNOTATED_CDS"/>
    <property type="molecule type" value="Genomic_DNA"/>
</dbReference>
<dbReference type="EMBL" id="CH471135">
    <property type="protein sequence ID" value="EAW72133.1"/>
    <property type="molecule type" value="Genomic_DNA"/>
</dbReference>
<dbReference type="EMBL" id="AK098804">
    <property type="protein sequence ID" value="BAC05417.1"/>
    <property type="status" value="ALT_SEQ"/>
    <property type="molecule type" value="mRNA"/>
</dbReference>
<dbReference type="EMBL" id="AB075859">
    <property type="protein sequence ID" value="BAB85565.1"/>
    <property type="status" value="ALT_SEQ"/>
    <property type="molecule type" value="mRNA"/>
</dbReference>
<dbReference type="CCDS" id="CCDS86802.1"/>
<dbReference type="RefSeq" id="NP_001335085.1">
    <property type="nucleotide sequence ID" value="NM_001348156.2"/>
</dbReference>
<dbReference type="SMR" id="Q8N782"/>
<dbReference type="FunCoup" id="Q8N782">
    <property type="interactions" value="21"/>
</dbReference>
<dbReference type="IntAct" id="Q8N782">
    <property type="interactions" value="2"/>
</dbReference>
<dbReference type="STRING" id="9606.ENSP00000417696"/>
<dbReference type="iPTMnet" id="Q8N782"/>
<dbReference type="PhosphoSitePlus" id="Q8N782"/>
<dbReference type="BioMuta" id="ZNF525"/>
<dbReference type="DMDM" id="205371818"/>
<dbReference type="jPOST" id="Q8N782"/>
<dbReference type="MassIVE" id="Q8N782"/>
<dbReference type="PaxDb" id="9606-ENSP00000417696"/>
<dbReference type="PeptideAtlas" id="Q8N782"/>
<dbReference type="ProteomicsDB" id="72274"/>
<dbReference type="Antibodypedia" id="81733">
    <property type="antibodies" value="1 antibodies from 1 providers"/>
</dbReference>
<dbReference type="DNASU" id="170958"/>
<dbReference type="Ensembl" id="ENST00000474037.6">
    <property type="protein sequence ID" value="ENSP00000417696.1"/>
    <property type="gene ID" value="ENSG00000203326.12"/>
</dbReference>
<dbReference type="GeneID" id="170958"/>
<dbReference type="KEGG" id="hsa:170958"/>
<dbReference type="MANE-Select" id="ENST00000474037.6">
    <property type="protein sequence ID" value="ENSP00000417696.1"/>
    <property type="RefSeq nucleotide sequence ID" value="NM_001348156.2"/>
    <property type="RefSeq protein sequence ID" value="NP_001335085.1"/>
</dbReference>
<dbReference type="UCSC" id="uc061cjl.1">
    <property type="organism name" value="human"/>
</dbReference>
<dbReference type="AGR" id="HGNC:29423"/>
<dbReference type="CTD" id="170958"/>
<dbReference type="GeneCards" id="ZNF525"/>
<dbReference type="HGNC" id="HGNC:29423">
    <property type="gene designation" value="ZNF525"/>
</dbReference>
<dbReference type="HPA" id="ENSG00000203326">
    <property type="expression patterns" value="Low tissue specificity"/>
</dbReference>
<dbReference type="neXtProt" id="NX_Q8N782"/>
<dbReference type="OpenTargets" id="ENSG00000203326"/>
<dbReference type="VEuPathDB" id="HostDB:ENSG00000203326"/>
<dbReference type="eggNOG" id="KOG1721">
    <property type="taxonomic scope" value="Eukaryota"/>
</dbReference>
<dbReference type="GeneTree" id="ENSGT00940000154397"/>
<dbReference type="HOGENOM" id="CLU_002678_44_0_1"/>
<dbReference type="InParanoid" id="Q8N782"/>
<dbReference type="OMA" id="TEQYDQS"/>
<dbReference type="OrthoDB" id="6077919at2759"/>
<dbReference type="PAN-GO" id="Q8N782">
    <property type="GO annotations" value="3 GO annotations based on evolutionary models"/>
</dbReference>
<dbReference type="PhylomeDB" id="Q8N782"/>
<dbReference type="TreeFam" id="TF341892"/>
<dbReference type="PathwayCommons" id="Q8N782"/>
<dbReference type="BioGRID-ORCS" id="170958">
    <property type="hits" value="0 hits in 63 CRISPR screens"/>
</dbReference>
<dbReference type="GenomeRNAi" id="170958"/>
<dbReference type="Pharos" id="Q8N782">
    <property type="development level" value="Tdark"/>
</dbReference>
<dbReference type="PRO" id="PR:Q8N782"/>
<dbReference type="Proteomes" id="UP000005640">
    <property type="component" value="Chromosome 19"/>
</dbReference>
<dbReference type="RNAct" id="Q8N782">
    <property type="molecule type" value="protein"/>
</dbReference>
<dbReference type="Bgee" id="ENSG00000203326">
    <property type="expression patterns" value="Expressed in calcaneal tendon and 102 other cell types or tissues"/>
</dbReference>
<dbReference type="GO" id="GO:0005634">
    <property type="term" value="C:nucleus"/>
    <property type="evidence" value="ECO:0007669"/>
    <property type="project" value="UniProtKB-SubCell"/>
</dbReference>
<dbReference type="GO" id="GO:0003677">
    <property type="term" value="F:DNA binding"/>
    <property type="evidence" value="ECO:0007669"/>
    <property type="project" value="UniProtKB-KW"/>
</dbReference>
<dbReference type="GO" id="GO:0008270">
    <property type="term" value="F:zinc ion binding"/>
    <property type="evidence" value="ECO:0007669"/>
    <property type="project" value="UniProtKB-KW"/>
</dbReference>
<dbReference type="GO" id="GO:0006355">
    <property type="term" value="P:regulation of DNA-templated transcription"/>
    <property type="evidence" value="ECO:0007669"/>
    <property type="project" value="InterPro"/>
</dbReference>
<dbReference type="CDD" id="cd07765">
    <property type="entry name" value="KRAB_A-box"/>
    <property type="match status" value="1"/>
</dbReference>
<dbReference type="FunFam" id="3.30.160.60:FF:000744">
    <property type="entry name" value="zinc finger E-box-binding homeobox 1"/>
    <property type="match status" value="1"/>
</dbReference>
<dbReference type="FunFam" id="3.30.160.60:FF:000745">
    <property type="entry name" value="zinc finger protein 181 isoform X1"/>
    <property type="match status" value="1"/>
</dbReference>
<dbReference type="FunFam" id="3.30.160.60:FF:002153">
    <property type="entry name" value="Zinc finger protein 30"/>
    <property type="match status" value="1"/>
</dbReference>
<dbReference type="FunFam" id="3.30.160.60:FF:002090">
    <property type="entry name" value="Zinc finger protein 473"/>
    <property type="match status" value="1"/>
</dbReference>
<dbReference type="FunFam" id="3.30.160.60:FF:001627">
    <property type="entry name" value="Zinc finger protein 655"/>
    <property type="match status" value="2"/>
</dbReference>
<dbReference type="FunFam" id="3.30.160.60:FF:000188">
    <property type="entry name" value="Zinc finger protein 787"/>
    <property type="match status" value="2"/>
</dbReference>
<dbReference type="FunFam" id="3.30.160.60:FF:002289">
    <property type="entry name" value="Zinc finger protein 813"/>
    <property type="match status" value="1"/>
</dbReference>
<dbReference type="Gene3D" id="6.10.140.140">
    <property type="match status" value="1"/>
</dbReference>
<dbReference type="Gene3D" id="3.30.160.60">
    <property type="entry name" value="Classic Zinc Finger"/>
    <property type="match status" value="9"/>
</dbReference>
<dbReference type="InterPro" id="IPR001909">
    <property type="entry name" value="KRAB"/>
</dbReference>
<dbReference type="InterPro" id="IPR036051">
    <property type="entry name" value="KRAB_dom_sf"/>
</dbReference>
<dbReference type="InterPro" id="IPR036236">
    <property type="entry name" value="Znf_C2H2_sf"/>
</dbReference>
<dbReference type="InterPro" id="IPR013087">
    <property type="entry name" value="Znf_C2H2_type"/>
</dbReference>
<dbReference type="PANTHER" id="PTHR23226:SF416">
    <property type="entry name" value="FI01424P"/>
    <property type="match status" value="1"/>
</dbReference>
<dbReference type="PANTHER" id="PTHR23226">
    <property type="entry name" value="ZINC FINGER AND SCAN DOMAIN-CONTAINING"/>
    <property type="match status" value="1"/>
</dbReference>
<dbReference type="Pfam" id="PF01352">
    <property type="entry name" value="KRAB"/>
    <property type="match status" value="1"/>
</dbReference>
<dbReference type="Pfam" id="PF00096">
    <property type="entry name" value="zf-C2H2"/>
    <property type="match status" value="5"/>
</dbReference>
<dbReference type="Pfam" id="PF13465">
    <property type="entry name" value="zf-H2C2_2"/>
    <property type="match status" value="1"/>
</dbReference>
<dbReference type="SMART" id="SM00349">
    <property type="entry name" value="KRAB"/>
    <property type="match status" value="1"/>
</dbReference>
<dbReference type="SMART" id="SM00355">
    <property type="entry name" value="ZnF_C2H2"/>
    <property type="match status" value="9"/>
</dbReference>
<dbReference type="SUPFAM" id="SSF57667">
    <property type="entry name" value="beta-beta-alpha zinc fingers"/>
    <property type="match status" value="6"/>
</dbReference>
<dbReference type="SUPFAM" id="SSF109640">
    <property type="entry name" value="KRAB domain (Kruppel-associated box)"/>
    <property type="match status" value="1"/>
</dbReference>
<dbReference type="PROSITE" id="PS50805">
    <property type="entry name" value="KRAB"/>
    <property type="match status" value="1"/>
</dbReference>
<dbReference type="PROSITE" id="PS00028">
    <property type="entry name" value="ZINC_FINGER_C2H2_1"/>
    <property type="match status" value="8"/>
</dbReference>
<dbReference type="PROSITE" id="PS50157">
    <property type="entry name" value="ZINC_FINGER_C2H2_2"/>
    <property type="match status" value="9"/>
</dbReference>
<organism>
    <name type="scientific">Homo sapiens</name>
    <name type="common">Human</name>
    <dbReference type="NCBI Taxonomy" id="9606"/>
    <lineage>
        <taxon>Eukaryota</taxon>
        <taxon>Metazoa</taxon>
        <taxon>Chordata</taxon>
        <taxon>Craniata</taxon>
        <taxon>Vertebrata</taxon>
        <taxon>Euteleostomi</taxon>
        <taxon>Mammalia</taxon>
        <taxon>Eutheria</taxon>
        <taxon>Euarchontoglires</taxon>
        <taxon>Primates</taxon>
        <taxon>Haplorrhini</taxon>
        <taxon>Catarrhini</taxon>
        <taxon>Hominidae</taxon>
        <taxon>Homo</taxon>
    </lineage>
</organism>
<name>ZN525_HUMAN</name>
<evidence type="ECO:0000255" key="1">
    <source>
        <dbReference type="PROSITE-ProRule" id="PRU00042"/>
    </source>
</evidence>
<evidence type="ECO:0000255" key="2">
    <source>
        <dbReference type="PROSITE-ProRule" id="PRU00119"/>
    </source>
</evidence>
<evidence type="ECO:0000305" key="3"/>
<sequence>MALPQGLLTFRDVAIEFSQEEWKCLDPAQRTLYRDVMLENYRNLVSLGISSKCTMKEFSSTAQGNTEVIHTGTLQRHERHHIGDFSFQEIEKDIHNFEFQWQEDERNGHEAPMTKIKKLMGSTEQYDHRHAGNKPIKYQLGSSFHSHLSELHIFQPKGKINNQVEKSINDASSVSTAQRISCRPKTHISNNYGDNFLNYSLLTQRQEVRMREKSFQCIESGKAFNYSSLLRKHQIIHLGEKQYKCDVCDKVFIRKRYLARHRRCHTGEKPYKCNECGKSFSQMSSLTYHHRLHTGEKPYKCEECDKAFRHNSALQRHRRIHTGEKPHKCNECGKTFSQKSYLACHRSIHTGKKPYECEECDKAFSFKSNLESHRITHTGEKPYKCNDCGKTFSHMSTLTCHRRLHTGEKPYKCEECDEAFRFKSSLERHRRIHNGEKLYKCNECGKTFSQELSLTCHCRLHSGEKPCKCGECDKAYSFK</sequence>
<proteinExistence type="evidence at protein level"/>